<organism>
    <name type="scientific">Campylobacter jejuni subsp. jejuni serotype O:2 (strain ATCC 700819 / NCTC 11168)</name>
    <dbReference type="NCBI Taxonomy" id="192222"/>
    <lineage>
        <taxon>Bacteria</taxon>
        <taxon>Pseudomonadati</taxon>
        <taxon>Campylobacterota</taxon>
        <taxon>Epsilonproteobacteria</taxon>
        <taxon>Campylobacterales</taxon>
        <taxon>Campylobacteraceae</taxon>
        <taxon>Campylobacter</taxon>
    </lineage>
</organism>
<proteinExistence type="inferred from homology"/>
<name>DAPB_CAMJE</name>
<accession>Q9PIT2</accession>
<accession>Q0PBU2</accession>
<feature type="chain" id="PRO_0000141422" description="4-hydroxy-tetrahydrodipicolinate reductase">
    <location>
        <begin position="1"/>
        <end position="242"/>
    </location>
</feature>
<feature type="active site" description="Proton donor/acceptor" evidence="1">
    <location>
        <position position="131"/>
    </location>
</feature>
<feature type="active site" description="Proton donor" evidence="1">
    <location>
        <position position="135"/>
    </location>
</feature>
<feature type="binding site" evidence="1">
    <location>
        <begin position="8"/>
        <end position="13"/>
    </location>
    <ligand>
        <name>NAD(+)</name>
        <dbReference type="ChEBI" id="CHEBI:57540"/>
    </ligand>
</feature>
<feature type="binding site" evidence="1">
    <location>
        <begin position="75"/>
        <end position="77"/>
    </location>
    <ligand>
        <name>NAD(+)</name>
        <dbReference type="ChEBI" id="CHEBI:57540"/>
    </ligand>
</feature>
<feature type="binding site" evidence="1">
    <location>
        <begin position="99"/>
        <end position="102"/>
    </location>
    <ligand>
        <name>NAD(+)</name>
        <dbReference type="ChEBI" id="CHEBI:57540"/>
    </ligand>
</feature>
<feature type="binding site" evidence="1">
    <location>
        <position position="132"/>
    </location>
    <ligand>
        <name>(S)-2,3,4,5-tetrahydrodipicolinate</name>
        <dbReference type="ChEBI" id="CHEBI:16845"/>
    </ligand>
</feature>
<feature type="binding site" evidence="1">
    <location>
        <begin position="141"/>
        <end position="142"/>
    </location>
    <ligand>
        <name>(S)-2,3,4,5-tetrahydrodipicolinate</name>
        <dbReference type="ChEBI" id="CHEBI:16845"/>
    </ligand>
</feature>
<comment type="function">
    <text evidence="1">Catalyzes the conversion of 4-hydroxy-tetrahydrodipicolinate (HTPA) to tetrahydrodipicolinate.</text>
</comment>
<comment type="catalytic activity">
    <reaction evidence="1">
        <text>(S)-2,3,4,5-tetrahydrodipicolinate + NAD(+) + H2O = (2S,4S)-4-hydroxy-2,3,4,5-tetrahydrodipicolinate + NADH + H(+)</text>
        <dbReference type="Rhea" id="RHEA:35323"/>
        <dbReference type="ChEBI" id="CHEBI:15377"/>
        <dbReference type="ChEBI" id="CHEBI:15378"/>
        <dbReference type="ChEBI" id="CHEBI:16845"/>
        <dbReference type="ChEBI" id="CHEBI:57540"/>
        <dbReference type="ChEBI" id="CHEBI:57945"/>
        <dbReference type="ChEBI" id="CHEBI:67139"/>
        <dbReference type="EC" id="1.17.1.8"/>
    </reaction>
</comment>
<comment type="catalytic activity">
    <reaction evidence="1">
        <text>(S)-2,3,4,5-tetrahydrodipicolinate + NADP(+) + H2O = (2S,4S)-4-hydroxy-2,3,4,5-tetrahydrodipicolinate + NADPH + H(+)</text>
        <dbReference type="Rhea" id="RHEA:35331"/>
        <dbReference type="ChEBI" id="CHEBI:15377"/>
        <dbReference type="ChEBI" id="CHEBI:15378"/>
        <dbReference type="ChEBI" id="CHEBI:16845"/>
        <dbReference type="ChEBI" id="CHEBI:57783"/>
        <dbReference type="ChEBI" id="CHEBI:58349"/>
        <dbReference type="ChEBI" id="CHEBI:67139"/>
        <dbReference type="EC" id="1.17.1.8"/>
    </reaction>
</comment>
<comment type="pathway">
    <text evidence="1">Amino-acid biosynthesis; L-lysine biosynthesis via DAP pathway; (S)-tetrahydrodipicolinate from L-aspartate: step 4/4.</text>
</comment>
<comment type="subcellular location">
    <subcellularLocation>
        <location evidence="1">Cytoplasm</location>
    </subcellularLocation>
</comment>
<comment type="similarity">
    <text evidence="1">Belongs to the DapB family.</text>
</comment>
<comment type="caution">
    <text evidence="2">Was originally thought to be a dihydrodipicolinate reductase (DHDPR), catalyzing the conversion of dihydrodipicolinate to tetrahydrodipicolinate. However, it was shown in E.coli that the substrate of the enzymatic reaction is not dihydrodipicolinate (DHDP) but in fact (2S,4S)-4-hydroxy-2,3,4,5-tetrahydrodipicolinic acid (HTPA), the product released by the DapA-catalyzed reaction.</text>
</comment>
<evidence type="ECO:0000255" key="1">
    <source>
        <dbReference type="HAMAP-Rule" id="MF_00102"/>
    </source>
</evidence>
<evidence type="ECO:0000305" key="2"/>
<reference key="1">
    <citation type="journal article" date="2000" name="Nature">
        <title>The genome sequence of the food-borne pathogen Campylobacter jejuni reveals hypervariable sequences.</title>
        <authorList>
            <person name="Parkhill J."/>
            <person name="Wren B.W."/>
            <person name="Mungall K.L."/>
            <person name="Ketley J.M."/>
            <person name="Churcher C.M."/>
            <person name="Basham D."/>
            <person name="Chillingworth T."/>
            <person name="Davies R.M."/>
            <person name="Feltwell T."/>
            <person name="Holroyd S."/>
            <person name="Jagels K."/>
            <person name="Karlyshev A.V."/>
            <person name="Moule S."/>
            <person name="Pallen M.J."/>
            <person name="Penn C.W."/>
            <person name="Quail M.A."/>
            <person name="Rajandream M.A."/>
            <person name="Rutherford K.M."/>
            <person name="van Vliet A.H.M."/>
            <person name="Whitehead S."/>
            <person name="Barrell B.G."/>
        </authorList>
    </citation>
    <scope>NUCLEOTIDE SEQUENCE [LARGE SCALE GENOMIC DNA]</scope>
    <source>
        <strain>ATCC 700819 / NCTC 11168</strain>
    </source>
</reference>
<dbReference type="EC" id="1.17.1.8" evidence="1"/>
<dbReference type="EMBL" id="AL111168">
    <property type="protein sequence ID" value="CAL34366.1"/>
    <property type="molecule type" value="Genomic_DNA"/>
</dbReference>
<dbReference type="PIR" id="D81438">
    <property type="entry name" value="D81438"/>
</dbReference>
<dbReference type="RefSeq" id="WP_002851754.1">
    <property type="nucleotide sequence ID" value="NZ_SZUC01000006.1"/>
</dbReference>
<dbReference type="RefSeq" id="YP_002343655.1">
    <property type="nucleotide sequence ID" value="NC_002163.1"/>
</dbReference>
<dbReference type="SMR" id="Q9PIT2"/>
<dbReference type="IntAct" id="Q9PIT2">
    <property type="interactions" value="53"/>
</dbReference>
<dbReference type="STRING" id="192222.Cj0197c"/>
<dbReference type="PaxDb" id="192222-Cj0197c"/>
<dbReference type="EnsemblBacteria" id="CAL34366">
    <property type="protein sequence ID" value="CAL34366"/>
    <property type="gene ID" value="Cj0197c"/>
</dbReference>
<dbReference type="GeneID" id="904539"/>
<dbReference type="KEGG" id="cje:Cj0197c"/>
<dbReference type="PATRIC" id="fig|192222.6.peg.194"/>
<dbReference type="eggNOG" id="COG0289">
    <property type="taxonomic scope" value="Bacteria"/>
</dbReference>
<dbReference type="HOGENOM" id="CLU_047479_2_2_7"/>
<dbReference type="OrthoDB" id="9790352at2"/>
<dbReference type="UniPathway" id="UPA00034">
    <property type="reaction ID" value="UER00018"/>
</dbReference>
<dbReference type="Proteomes" id="UP000000799">
    <property type="component" value="Chromosome"/>
</dbReference>
<dbReference type="GO" id="GO:0005829">
    <property type="term" value="C:cytosol"/>
    <property type="evidence" value="ECO:0007669"/>
    <property type="project" value="TreeGrafter"/>
</dbReference>
<dbReference type="GO" id="GO:0008839">
    <property type="term" value="F:4-hydroxy-tetrahydrodipicolinate reductase"/>
    <property type="evidence" value="ECO:0007669"/>
    <property type="project" value="UniProtKB-EC"/>
</dbReference>
<dbReference type="GO" id="GO:0051287">
    <property type="term" value="F:NAD binding"/>
    <property type="evidence" value="ECO:0007669"/>
    <property type="project" value="UniProtKB-UniRule"/>
</dbReference>
<dbReference type="GO" id="GO:0050661">
    <property type="term" value="F:NADP binding"/>
    <property type="evidence" value="ECO:0007669"/>
    <property type="project" value="UniProtKB-UniRule"/>
</dbReference>
<dbReference type="GO" id="GO:0016726">
    <property type="term" value="F:oxidoreductase activity, acting on CH or CH2 groups, NAD or NADP as acceptor"/>
    <property type="evidence" value="ECO:0007669"/>
    <property type="project" value="UniProtKB-UniRule"/>
</dbReference>
<dbReference type="GO" id="GO:0019877">
    <property type="term" value="P:diaminopimelate biosynthetic process"/>
    <property type="evidence" value="ECO:0007669"/>
    <property type="project" value="UniProtKB-UniRule"/>
</dbReference>
<dbReference type="GO" id="GO:0009089">
    <property type="term" value="P:lysine biosynthetic process via diaminopimelate"/>
    <property type="evidence" value="ECO:0007669"/>
    <property type="project" value="UniProtKB-UniRule"/>
</dbReference>
<dbReference type="CDD" id="cd02274">
    <property type="entry name" value="DHDPR_N"/>
    <property type="match status" value="1"/>
</dbReference>
<dbReference type="FunFam" id="3.30.360.10:FF:000004">
    <property type="entry name" value="4-hydroxy-tetrahydrodipicolinate reductase"/>
    <property type="match status" value="1"/>
</dbReference>
<dbReference type="Gene3D" id="3.30.360.10">
    <property type="entry name" value="Dihydrodipicolinate Reductase, domain 2"/>
    <property type="match status" value="1"/>
</dbReference>
<dbReference type="Gene3D" id="3.40.50.720">
    <property type="entry name" value="NAD(P)-binding Rossmann-like Domain"/>
    <property type="match status" value="1"/>
</dbReference>
<dbReference type="HAMAP" id="MF_00102">
    <property type="entry name" value="DapB"/>
    <property type="match status" value="1"/>
</dbReference>
<dbReference type="InterPro" id="IPR022663">
    <property type="entry name" value="DapB_C"/>
</dbReference>
<dbReference type="InterPro" id="IPR000846">
    <property type="entry name" value="DapB_N"/>
</dbReference>
<dbReference type="InterPro" id="IPR022664">
    <property type="entry name" value="DapB_N_CS"/>
</dbReference>
<dbReference type="InterPro" id="IPR023940">
    <property type="entry name" value="DHDPR_bac"/>
</dbReference>
<dbReference type="InterPro" id="IPR036291">
    <property type="entry name" value="NAD(P)-bd_dom_sf"/>
</dbReference>
<dbReference type="NCBIfam" id="TIGR00036">
    <property type="entry name" value="dapB"/>
    <property type="match status" value="1"/>
</dbReference>
<dbReference type="PANTHER" id="PTHR20836:SF0">
    <property type="entry name" value="4-HYDROXY-TETRAHYDRODIPICOLINATE REDUCTASE 1, CHLOROPLASTIC-RELATED"/>
    <property type="match status" value="1"/>
</dbReference>
<dbReference type="PANTHER" id="PTHR20836">
    <property type="entry name" value="DIHYDRODIPICOLINATE REDUCTASE"/>
    <property type="match status" value="1"/>
</dbReference>
<dbReference type="Pfam" id="PF05173">
    <property type="entry name" value="DapB_C"/>
    <property type="match status" value="1"/>
</dbReference>
<dbReference type="Pfam" id="PF01113">
    <property type="entry name" value="DapB_N"/>
    <property type="match status" value="1"/>
</dbReference>
<dbReference type="PIRSF" id="PIRSF000161">
    <property type="entry name" value="DHPR"/>
    <property type="match status" value="1"/>
</dbReference>
<dbReference type="SUPFAM" id="SSF55347">
    <property type="entry name" value="Glyceraldehyde-3-phosphate dehydrogenase-like, C-terminal domain"/>
    <property type="match status" value="1"/>
</dbReference>
<dbReference type="SUPFAM" id="SSF51735">
    <property type="entry name" value="NAD(P)-binding Rossmann-fold domains"/>
    <property type="match status" value="1"/>
</dbReference>
<dbReference type="PROSITE" id="PS01298">
    <property type="entry name" value="DAPB"/>
    <property type="match status" value="1"/>
</dbReference>
<sequence>MIKIGIYGAKGRMGKQIEECLKSETQARISILYDKGGNLGELFEKSDVIIDFSSPSGTHELLNYARTMPKPLVIGTTGLDEKILHLMQSASEVMPIFYATNMSLGVAVLNYLASKASQMLRNFDIEILEMHHRHKKDAPSGTAMTLAQSVAKARNLELEKVRVSGRDGIIGERSKDEIAVMSLRGGDIVGRHTVGFYEDGEFLELNHTATSRATFAKGAIKIAIWLSKQEAKMYSINDFLGI</sequence>
<gene>
    <name evidence="1" type="primary">dapB</name>
    <name type="ordered locus">Cj0197c</name>
</gene>
<keyword id="KW-0028">Amino-acid biosynthesis</keyword>
<keyword id="KW-0963">Cytoplasm</keyword>
<keyword id="KW-0220">Diaminopimelate biosynthesis</keyword>
<keyword id="KW-0457">Lysine biosynthesis</keyword>
<keyword id="KW-0520">NAD</keyword>
<keyword id="KW-0521">NADP</keyword>
<keyword id="KW-0560">Oxidoreductase</keyword>
<keyword id="KW-1185">Reference proteome</keyword>
<protein>
    <recommendedName>
        <fullName evidence="1">4-hydroxy-tetrahydrodipicolinate reductase</fullName>
        <shortName evidence="1">HTPA reductase</shortName>
        <ecNumber evidence="1">1.17.1.8</ecNumber>
    </recommendedName>
</protein>